<feature type="chain" id="PRO_0000236491" description="Large ribosomal subunit protein bL9">
    <location>
        <begin position="1"/>
        <end position="151"/>
    </location>
</feature>
<protein>
    <recommendedName>
        <fullName evidence="1">Large ribosomal subunit protein bL9</fullName>
    </recommendedName>
    <alternativeName>
        <fullName evidence="2">50S ribosomal protein L9</fullName>
    </alternativeName>
</protein>
<reference key="1">
    <citation type="journal article" date="2003" name="Nat. Genet.">
        <title>Comparative analysis of the genome sequences of Bordetella pertussis, Bordetella parapertussis and Bordetella bronchiseptica.</title>
        <authorList>
            <person name="Parkhill J."/>
            <person name="Sebaihia M."/>
            <person name="Preston A."/>
            <person name="Murphy L.D."/>
            <person name="Thomson N.R."/>
            <person name="Harris D.E."/>
            <person name="Holden M.T.G."/>
            <person name="Churcher C.M."/>
            <person name="Bentley S.D."/>
            <person name="Mungall K.L."/>
            <person name="Cerdeno-Tarraga A.-M."/>
            <person name="Temple L."/>
            <person name="James K.D."/>
            <person name="Harris B."/>
            <person name="Quail M.A."/>
            <person name="Achtman M."/>
            <person name="Atkin R."/>
            <person name="Baker S."/>
            <person name="Basham D."/>
            <person name="Bason N."/>
            <person name="Cherevach I."/>
            <person name="Chillingworth T."/>
            <person name="Collins M."/>
            <person name="Cronin A."/>
            <person name="Davis P."/>
            <person name="Doggett J."/>
            <person name="Feltwell T."/>
            <person name="Goble A."/>
            <person name="Hamlin N."/>
            <person name="Hauser H."/>
            <person name="Holroyd S."/>
            <person name="Jagels K."/>
            <person name="Leather S."/>
            <person name="Moule S."/>
            <person name="Norberczak H."/>
            <person name="O'Neil S."/>
            <person name="Ormond D."/>
            <person name="Price C."/>
            <person name="Rabbinowitsch E."/>
            <person name="Rutter S."/>
            <person name="Sanders M."/>
            <person name="Saunders D."/>
            <person name="Seeger K."/>
            <person name="Sharp S."/>
            <person name="Simmonds M."/>
            <person name="Skelton J."/>
            <person name="Squares R."/>
            <person name="Squares S."/>
            <person name="Stevens K."/>
            <person name="Unwin L."/>
            <person name="Whitehead S."/>
            <person name="Barrell B.G."/>
            <person name="Maskell D.J."/>
        </authorList>
    </citation>
    <scope>NUCLEOTIDE SEQUENCE [LARGE SCALE GENOMIC DNA]</scope>
    <source>
        <strain>12822 / ATCC BAA-587 / NCTC 13253</strain>
    </source>
</reference>
<keyword id="KW-0687">Ribonucleoprotein</keyword>
<keyword id="KW-0689">Ribosomal protein</keyword>
<keyword id="KW-0694">RNA-binding</keyword>
<keyword id="KW-0699">rRNA-binding</keyword>
<evidence type="ECO:0000255" key="1">
    <source>
        <dbReference type="HAMAP-Rule" id="MF_00503"/>
    </source>
</evidence>
<evidence type="ECO:0000305" key="2"/>
<comment type="function">
    <text evidence="1">Binds to the 23S rRNA.</text>
</comment>
<comment type="similarity">
    <text evidence="1">Belongs to the bacterial ribosomal protein bL9 family.</text>
</comment>
<sequence>MQIILLEKVANLGNLGEVVRVRDGYARNFLIPQKKARRATDAALKEFEARRAELEKVQAEKLAAAQALAERLNGFQLKISQKAGVDGRLFGSVTNADVAEGLRKAGFEAVEKSQVRMPNGQIKAVGEYPVQAVLHADVVADVVVLVEGEMA</sequence>
<organism>
    <name type="scientific">Bordetella parapertussis (strain 12822 / ATCC BAA-587 / NCTC 13253)</name>
    <dbReference type="NCBI Taxonomy" id="257311"/>
    <lineage>
        <taxon>Bacteria</taxon>
        <taxon>Pseudomonadati</taxon>
        <taxon>Pseudomonadota</taxon>
        <taxon>Betaproteobacteria</taxon>
        <taxon>Burkholderiales</taxon>
        <taxon>Alcaligenaceae</taxon>
        <taxon>Bordetella</taxon>
    </lineage>
</organism>
<proteinExistence type="inferred from homology"/>
<dbReference type="EMBL" id="BX640430">
    <property type="protein sequence ID" value="CAE37764.1"/>
    <property type="molecule type" value="Genomic_DNA"/>
</dbReference>
<dbReference type="RefSeq" id="WP_003813092.1">
    <property type="nucleotide sequence ID" value="NC_002928.3"/>
</dbReference>
<dbReference type="SMR" id="Q7W7P5"/>
<dbReference type="GeneID" id="93204253"/>
<dbReference type="KEGG" id="bpa:BPP2469"/>
<dbReference type="HOGENOM" id="CLU_078938_4_1_4"/>
<dbReference type="Proteomes" id="UP000001421">
    <property type="component" value="Chromosome"/>
</dbReference>
<dbReference type="GO" id="GO:1990904">
    <property type="term" value="C:ribonucleoprotein complex"/>
    <property type="evidence" value="ECO:0007669"/>
    <property type="project" value="UniProtKB-KW"/>
</dbReference>
<dbReference type="GO" id="GO:0005840">
    <property type="term" value="C:ribosome"/>
    <property type="evidence" value="ECO:0007669"/>
    <property type="project" value="UniProtKB-KW"/>
</dbReference>
<dbReference type="GO" id="GO:0019843">
    <property type="term" value="F:rRNA binding"/>
    <property type="evidence" value="ECO:0007669"/>
    <property type="project" value="UniProtKB-UniRule"/>
</dbReference>
<dbReference type="GO" id="GO:0003735">
    <property type="term" value="F:structural constituent of ribosome"/>
    <property type="evidence" value="ECO:0007669"/>
    <property type="project" value="InterPro"/>
</dbReference>
<dbReference type="GO" id="GO:0006412">
    <property type="term" value="P:translation"/>
    <property type="evidence" value="ECO:0007669"/>
    <property type="project" value="UniProtKB-UniRule"/>
</dbReference>
<dbReference type="Gene3D" id="3.10.430.100">
    <property type="entry name" value="Ribosomal protein L9, C-terminal domain"/>
    <property type="match status" value="1"/>
</dbReference>
<dbReference type="Gene3D" id="3.40.5.10">
    <property type="entry name" value="Ribosomal protein L9, N-terminal domain"/>
    <property type="match status" value="1"/>
</dbReference>
<dbReference type="HAMAP" id="MF_00503">
    <property type="entry name" value="Ribosomal_bL9"/>
    <property type="match status" value="1"/>
</dbReference>
<dbReference type="InterPro" id="IPR000244">
    <property type="entry name" value="Ribosomal_bL9"/>
</dbReference>
<dbReference type="InterPro" id="IPR009027">
    <property type="entry name" value="Ribosomal_bL9/RNase_H1_N"/>
</dbReference>
<dbReference type="InterPro" id="IPR020594">
    <property type="entry name" value="Ribosomal_bL9_bac/chp"/>
</dbReference>
<dbReference type="InterPro" id="IPR020069">
    <property type="entry name" value="Ribosomal_bL9_C"/>
</dbReference>
<dbReference type="InterPro" id="IPR036791">
    <property type="entry name" value="Ribosomal_bL9_C_sf"/>
</dbReference>
<dbReference type="InterPro" id="IPR020070">
    <property type="entry name" value="Ribosomal_bL9_N"/>
</dbReference>
<dbReference type="InterPro" id="IPR036935">
    <property type="entry name" value="Ribosomal_bL9_N_sf"/>
</dbReference>
<dbReference type="NCBIfam" id="TIGR00158">
    <property type="entry name" value="L9"/>
    <property type="match status" value="1"/>
</dbReference>
<dbReference type="PANTHER" id="PTHR21368">
    <property type="entry name" value="50S RIBOSOMAL PROTEIN L9"/>
    <property type="match status" value="1"/>
</dbReference>
<dbReference type="Pfam" id="PF03948">
    <property type="entry name" value="Ribosomal_L9_C"/>
    <property type="match status" value="1"/>
</dbReference>
<dbReference type="Pfam" id="PF01281">
    <property type="entry name" value="Ribosomal_L9_N"/>
    <property type="match status" value="1"/>
</dbReference>
<dbReference type="SUPFAM" id="SSF55658">
    <property type="entry name" value="L9 N-domain-like"/>
    <property type="match status" value="1"/>
</dbReference>
<dbReference type="SUPFAM" id="SSF55653">
    <property type="entry name" value="Ribosomal protein L9 C-domain"/>
    <property type="match status" value="1"/>
</dbReference>
<dbReference type="PROSITE" id="PS00651">
    <property type="entry name" value="RIBOSOMAL_L9"/>
    <property type="match status" value="1"/>
</dbReference>
<accession>Q7W7P5</accession>
<gene>
    <name evidence="1" type="primary">rplI</name>
    <name type="ordered locus">BPP2469</name>
</gene>
<name>RL9_BORPA</name>